<evidence type="ECO:0000255" key="1">
    <source>
        <dbReference type="HAMAP-Rule" id="MF_00652"/>
    </source>
</evidence>
<name>Y2278_VIBCM</name>
<dbReference type="EMBL" id="CP001233">
    <property type="protein sequence ID" value="ACP06579.1"/>
    <property type="molecule type" value="Genomic_DNA"/>
</dbReference>
<dbReference type="SMR" id="C3LQC7"/>
<dbReference type="KEGG" id="vcm:VCM66_2278"/>
<dbReference type="HOGENOM" id="CLU_061989_0_0_6"/>
<dbReference type="Proteomes" id="UP000001217">
    <property type="component" value="Chromosome I"/>
</dbReference>
<dbReference type="GO" id="GO:0005829">
    <property type="term" value="C:cytosol"/>
    <property type="evidence" value="ECO:0007669"/>
    <property type="project" value="TreeGrafter"/>
</dbReference>
<dbReference type="GO" id="GO:0033194">
    <property type="term" value="P:response to hydroperoxide"/>
    <property type="evidence" value="ECO:0007669"/>
    <property type="project" value="TreeGrafter"/>
</dbReference>
<dbReference type="HAMAP" id="MF_00652">
    <property type="entry name" value="UPF0246"/>
    <property type="match status" value="1"/>
</dbReference>
<dbReference type="InterPro" id="IPR005583">
    <property type="entry name" value="YaaA"/>
</dbReference>
<dbReference type="NCBIfam" id="NF002541">
    <property type="entry name" value="PRK02101.1-1"/>
    <property type="match status" value="1"/>
</dbReference>
<dbReference type="NCBIfam" id="NF002542">
    <property type="entry name" value="PRK02101.1-3"/>
    <property type="match status" value="1"/>
</dbReference>
<dbReference type="PANTHER" id="PTHR30283:SF4">
    <property type="entry name" value="PEROXIDE STRESS RESISTANCE PROTEIN YAAA"/>
    <property type="match status" value="1"/>
</dbReference>
<dbReference type="PANTHER" id="PTHR30283">
    <property type="entry name" value="PEROXIDE STRESS RESPONSE PROTEIN YAAA"/>
    <property type="match status" value="1"/>
</dbReference>
<dbReference type="Pfam" id="PF03883">
    <property type="entry name" value="H2O2_YaaD"/>
    <property type="match status" value="1"/>
</dbReference>
<feature type="chain" id="PRO_1000200433" description="UPF0246 protein VCM66_2278">
    <location>
        <begin position="1"/>
        <end position="257"/>
    </location>
</feature>
<proteinExistence type="inferred from homology"/>
<protein>
    <recommendedName>
        <fullName evidence="1">UPF0246 protein VCM66_2278</fullName>
    </recommendedName>
</protein>
<comment type="similarity">
    <text evidence="1">Belongs to the UPF0246 family.</text>
</comment>
<sequence>MLIVVSPAKTLDYESPVSTSNFTQPELTAHSAELIQVCRTLSSQDVSELMSVSDKIAGLNVARFAQWSETFTLDNARQAIFAFKGDVYTGLEAETLSPQDLDFAQQHLRMLSGLYGVLRPLDLMQPYRLEMGTKLANARGANLYQFWGDIITEKLNQAIEAQGDNVLVNLASNEYFKAVNPKRLNAQIVTPIFKDAKNGQYKIISFFAKKARGMMARYIIENRIKSVKDLEGFNTAGYYFVASESTPTELVFKREEQ</sequence>
<accession>C3LQC7</accession>
<gene>
    <name type="ordered locus">VCM66_2278</name>
</gene>
<reference key="1">
    <citation type="journal article" date="2008" name="PLoS ONE">
        <title>A recalibrated molecular clock and independent origins for the cholera pandemic clones.</title>
        <authorList>
            <person name="Feng L."/>
            <person name="Reeves P.R."/>
            <person name="Lan R."/>
            <person name="Ren Y."/>
            <person name="Gao C."/>
            <person name="Zhou Z."/>
            <person name="Ren Y."/>
            <person name="Cheng J."/>
            <person name="Wang W."/>
            <person name="Wang J."/>
            <person name="Qian W."/>
            <person name="Li D."/>
            <person name="Wang L."/>
        </authorList>
    </citation>
    <scope>NUCLEOTIDE SEQUENCE [LARGE SCALE GENOMIC DNA]</scope>
    <source>
        <strain>M66-2</strain>
    </source>
</reference>
<organism>
    <name type="scientific">Vibrio cholerae serotype O1 (strain M66-2)</name>
    <dbReference type="NCBI Taxonomy" id="579112"/>
    <lineage>
        <taxon>Bacteria</taxon>
        <taxon>Pseudomonadati</taxon>
        <taxon>Pseudomonadota</taxon>
        <taxon>Gammaproteobacteria</taxon>
        <taxon>Vibrionales</taxon>
        <taxon>Vibrionaceae</taxon>
        <taxon>Vibrio</taxon>
    </lineage>
</organism>